<dbReference type="EC" id="6.1.1.7" evidence="1"/>
<dbReference type="EMBL" id="CP000667">
    <property type="protein sequence ID" value="ABP54290.1"/>
    <property type="molecule type" value="Genomic_DNA"/>
</dbReference>
<dbReference type="RefSeq" id="WP_011905721.1">
    <property type="nucleotide sequence ID" value="NC_009380.1"/>
</dbReference>
<dbReference type="SMR" id="A4X5Z0"/>
<dbReference type="STRING" id="369723.Strop_1828"/>
<dbReference type="KEGG" id="stp:Strop_1828"/>
<dbReference type="PATRIC" id="fig|369723.5.peg.1876"/>
<dbReference type="eggNOG" id="COG0013">
    <property type="taxonomic scope" value="Bacteria"/>
</dbReference>
<dbReference type="HOGENOM" id="CLU_004485_1_1_11"/>
<dbReference type="Proteomes" id="UP000000235">
    <property type="component" value="Chromosome"/>
</dbReference>
<dbReference type="GO" id="GO:0005829">
    <property type="term" value="C:cytosol"/>
    <property type="evidence" value="ECO:0007669"/>
    <property type="project" value="TreeGrafter"/>
</dbReference>
<dbReference type="GO" id="GO:0004813">
    <property type="term" value="F:alanine-tRNA ligase activity"/>
    <property type="evidence" value="ECO:0007669"/>
    <property type="project" value="UniProtKB-UniRule"/>
</dbReference>
<dbReference type="GO" id="GO:0002161">
    <property type="term" value="F:aminoacyl-tRNA deacylase activity"/>
    <property type="evidence" value="ECO:0007669"/>
    <property type="project" value="TreeGrafter"/>
</dbReference>
<dbReference type="GO" id="GO:0005524">
    <property type="term" value="F:ATP binding"/>
    <property type="evidence" value="ECO:0007669"/>
    <property type="project" value="UniProtKB-UniRule"/>
</dbReference>
<dbReference type="GO" id="GO:0000049">
    <property type="term" value="F:tRNA binding"/>
    <property type="evidence" value="ECO:0007669"/>
    <property type="project" value="UniProtKB-KW"/>
</dbReference>
<dbReference type="GO" id="GO:0008270">
    <property type="term" value="F:zinc ion binding"/>
    <property type="evidence" value="ECO:0007669"/>
    <property type="project" value="UniProtKB-UniRule"/>
</dbReference>
<dbReference type="GO" id="GO:0006419">
    <property type="term" value="P:alanyl-tRNA aminoacylation"/>
    <property type="evidence" value="ECO:0007669"/>
    <property type="project" value="UniProtKB-UniRule"/>
</dbReference>
<dbReference type="CDD" id="cd00673">
    <property type="entry name" value="AlaRS_core"/>
    <property type="match status" value="1"/>
</dbReference>
<dbReference type="FunFam" id="3.10.310.40:FF:000001">
    <property type="entry name" value="Alanine--tRNA ligase"/>
    <property type="match status" value="1"/>
</dbReference>
<dbReference type="FunFam" id="3.30.54.20:FF:000001">
    <property type="entry name" value="Alanine--tRNA ligase"/>
    <property type="match status" value="1"/>
</dbReference>
<dbReference type="FunFam" id="3.30.930.10:FF:000004">
    <property type="entry name" value="Alanine--tRNA ligase"/>
    <property type="match status" value="1"/>
</dbReference>
<dbReference type="FunFam" id="3.30.980.10:FF:000004">
    <property type="entry name" value="Alanine--tRNA ligase, cytoplasmic"/>
    <property type="match status" value="1"/>
</dbReference>
<dbReference type="Gene3D" id="2.40.30.130">
    <property type="match status" value="1"/>
</dbReference>
<dbReference type="Gene3D" id="3.10.310.40">
    <property type="match status" value="1"/>
</dbReference>
<dbReference type="Gene3D" id="3.30.54.20">
    <property type="match status" value="1"/>
</dbReference>
<dbReference type="Gene3D" id="6.10.250.550">
    <property type="match status" value="1"/>
</dbReference>
<dbReference type="Gene3D" id="3.30.930.10">
    <property type="entry name" value="Bira Bifunctional Protein, Domain 2"/>
    <property type="match status" value="1"/>
</dbReference>
<dbReference type="Gene3D" id="3.30.980.10">
    <property type="entry name" value="Threonyl-trna Synthetase, Chain A, domain 2"/>
    <property type="match status" value="1"/>
</dbReference>
<dbReference type="HAMAP" id="MF_00036_B">
    <property type="entry name" value="Ala_tRNA_synth_B"/>
    <property type="match status" value="1"/>
</dbReference>
<dbReference type="InterPro" id="IPR045864">
    <property type="entry name" value="aa-tRNA-synth_II/BPL/LPL"/>
</dbReference>
<dbReference type="InterPro" id="IPR002318">
    <property type="entry name" value="Ala-tRNA-lgiase_IIc"/>
</dbReference>
<dbReference type="InterPro" id="IPR018162">
    <property type="entry name" value="Ala-tRNA-ligase_IIc_anticod-bd"/>
</dbReference>
<dbReference type="InterPro" id="IPR018165">
    <property type="entry name" value="Ala-tRNA-synth_IIc_core"/>
</dbReference>
<dbReference type="InterPro" id="IPR018164">
    <property type="entry name" value="Ala-tRNA-synth_IIc_N"/>
</dbReference>
<dbReference type="InterPro" id="IPR050058">
    <property type="entry name" value="Ala-tRNA_ligase"/>
</dbReference>
<dbReference type="InterPro" id="IPR023033">
    <property type="entry name" value="Ala_tRNA_ligase_euk/bac"/>
</dbReference>
<dbReference type="InterPro" id="IPR018163">
    <property type="entry name" value="Thr/Ala-tRNA-synth_IIc_edit"/>
</dbReference>
<dbReference type="InterPro" id="IPR009000">
    <property type="entry name" value="Transl_B-barrel_sf"/>
</dbReference>
<dbReference type="InterPro" id="IPR012947">
    <property type="entry name" value="tRNA_SAD"/>
</dbReference>
<dbReference type="NCBIfam" id="TIGR00344">
    <property type="entry name" value="alaS"/>
    <property type="match status" value="1"/>
</dbReference>
<dbReference type="PANTHER" id="PTHR11777:SF9">
    <property type="entry name" value="ALANINE--TRNA LIGASE, CYTOPLASMIC"/>
    <property type="match status" value="1"/>
</dbReference>
<dbReference type="PANTHER" id="PTHR11777">
    <property type="entry name" value="ALANYL-TRNA SYNTHETASE"/>
    <property type="match status" value="1"/>
</dbReference>
<dbReference type="Pfam" id="PF01411">
    <property type="entry name" value="tRNA-synt_2c"/>
    <property type="match status" value="1"/>
</dbReference>
<dbReference type="Pfam" id="PF07973">
    <property type="entry name" value="tRNA_SAD"/>
    <property type="match status" value="1"/>
</dbReference>
<dbReference type="PRINTS" id="PR00980">
    <property type="entry name" value="TRNASYNTHALA"/>
</dbReference>
<dbReference type="SMART" id="SM00863">
    <property type="entry name" value="tRNA_SAD"/>
    <property type="match status" value="1"/>
</dbReference>
<dbReference type="SUPFAM" id="SSF55681">
    <property type="entry name" value="Class II aaRS and biotin synthetases"/>
    <property type="match status" value="1"/>
</dbReference>
<dbReference type="SUPFAM" id="SSF101353">
    <property type="entry name" value="Putative anticodon-binding domain of alanyl-tRNA synthetase (AlaRS)"/>
    <property type="match status" value="1"/>
</dbReference>
<dbReference type="SUPFAM" id="SSF55186">
    <property type="entry name" value="ThrRS/AlaRS common domain"/>
    <property type="match status" value="1"/>
</dbReference>
<dbReference type="SUPFAM" id="SSF50447">
    <property type="entry name" value="Translation proteins"/>
    <property type="match status" value="1"/>
</dbReference>
<dbReference type="PROSITE" id="PS50860">
    <property type="entry name" value="AA_TRNA_LIGASE_II_ALA"/>
    <property type="match status" value="1"/>
</dbReference>
<reference key="1">
    <citation type="journal article" date="2007" name="Proc. Natl. Acad. Sci. U.S.A.">
        <title>Genome sequencing reveals complex secondary metabolome in the marine actinomycete Salinispora tropica.</title>
        <authorList>
            <person name="Udwary D.W."/>
            <person name="Zeigler L."/>
            <person name="Asolkar R.N."/>
            <person name="Singan V."/>
            <person name="Lapidus A."/>
            <person name="Fenical W."/>
            <person name="Jensen P.R."/>
            <person name="Moore B.S."/>
        </authorList>
    </citation>
    <scope>NUCLEOTIDE SEQUENCE [LARGE SCALE GENOMIC DNA]</scope>
    <source>
        <strain>ATCC BAA-916 / DSM 44818 / JCM 13857 / NBRC 105044 / CNB-440</strain>
    </source>
</reference>
<evidence type="ECO:0000255" key="1">
    <source>
        <dbReference type="HAMAP-Rule" id="MF_00036"/>
    </source>
</evidence>
<keyword id="KW-0030">Aminoacyl-tRNA synthetase</keyword>
<keyword id="KW-0067">ATP-binding</keyword>
<keyword id="KW-0963">Cytoplasm</keyword>
<keyword id="KW-0436">Ligase</keyword>
<keyword id="KW-0479">Metal-binding</keyword>
<keyword id="KW-0547">Nucleotide-binding</keyword>
<keyword id="KW-0648">Protein biosynthesis</keyword>
<keyword id="KW-1185">Reference proteome</keyword>
<keyword id="KW-0694">RNA-binding</keyword>
<keyword id="KW-0820">tRNA-binding</keyword>
<keyword id="KW-0862">Zinc</keyword>
<accession>A4X5Z0</accession>
<feature type="chain" id="PRO_0000347776" description="Alanine--tRNA ligase">
    <location>
        <begin position="1"/>
        <end position="892"/>
    </location>
</feature>
<feature type="binding site" evidence="1">
    <location>
        <position position="580"/>
    </location>
    <ligand>
        <name>Zn(2+)</name>
        <dbReference type="ChEBI" id="CHEBI:29105"/>
    </ligand>
</feature>
<feature type="binding site" evidence="1">
    <location>
        <position position="584"/>
    </location>
    <ligand>
        <name>Zn(2+)</name>
        <dbReference type="ChEBI" id="CHEBI:29105"/>
    </ligand>
</feature>
<feature type="binding site" evidence="1">
    <location>
        <position position="682"/>
    </location>
    <ligand>
        <name>Zn(2+)</name>
        <dbReference type="ChEBI" id="CHEBI:29105"/>
    </ligand>
</feature>
<feature type="binding site" evidence="1">
    <location>
        <position position="686"/>
    </location>
    <ligand>
        <name>Zn(2+)</name>
        <dbReference type="ChEBI" id="CHEBI:29105"/>
    </ligand>
</feature>
<gene>
    <name evidence="1" type="primary">alaS</name>
    <name type="ordered locus">Strop_1828</name>
</gene>
<name>SYA_SALTO</name>
<sequence length="892" mass="96214">MKTAEIRRRYLAHFEANGHAVVPSAPLPAISDPNLLFVAAGMMQFVPYFLGQQTAPYKRAVSVQKCLRTPDIDEVGKTSRHGTFFQMNGNFSFGDYFKDEAIPLAWELSTKPVDAGGLGLDPDRIWPTVYLDDDEAFQIWRSVGVPADRIVRRGKADNFWSMGIPGPCGPCSELFYDRGPEYGREGGPEVDEDRYLEFWNLVFMQFERGPGTGKEDYPILGDLPAKNIDTGMGLERMASILQGVDNLYEIDEVRPILAKAAELTGKRYGAHSGQVASESHPDDVRLRVVADHVRTALMLIGDGVIPSNEGRGYVLRRIMRRAIRSIRLLGWQERAMPELLPVARDCMSASYPELATDFGRIADYAYAEEDAFLSTLRAGTTILDTAIAETRTAGRRAISGAKAFQLHDTYGFPIDLTLEIASEQGLQVDAEGFRRLMADQRARAKADAQARKTGHVDLSAYRTVLDEGGPVTFTGYQEVSRESTVRAVLGAASPHAAAVEGETVELVLDTTPFYAEGGGQQPDLGVITVGGGQVEVLDVQQPVPGLIVHRARVLRGEVRVGETGFAEIDTDRRRAISRSHTATHLVHQTMRNFLGESATQAGSLNAPGRLRFDFNTPTGVAPSVLRDVEQQVNEALLADLEVRAFVTSLAEARRIGAMALFGEKYGEQVRVVEVGDYARELCGGTHVGRSGQLGLVKILSESSIGSGVRRVEALVGIDAFNFLAREHLLVARLAELYRVPSDQVAERVEQTVTQLRDAEKELEKLRAQLVLGGAAALAAQASEVRGVAYVGTEAPEGAAGNDVRTLAQEIRSRIDPARPAVVAVAARANGKASLVVAVNPAARSQGLSAADLVKVAFAGRGGGSPELAQGGGLPAAEAPGLLRTVENAIAGA</sequence>
<comment type="function">
    <text evidence="1">Catalyzes the attachment of alanine to tRNA(Ala) in a two-step reaction: alanine is first activated by ATP to form Ala-AMP and then transferred to the acceptor end of tRNA(Ala). Also edits incorrectly charged Ser-tRNA(Ala) and Gly-tRNA(Ala) via its editing domain.</text>
</comment>
<comment type="catalytic activity">
    <reaction evidence="1">
        <text>tRNA(Ala) + L-alanine + ATP = L-alanyl-tRNA(Ala) + AMP + diphosphate</text>
        <dbReference type="Rhea" id="RHEA:12540"/>
        <dbReference type="Rhea" id="RHEA-COMP:9657"/>
        <dbReference type="Rhea" id="RHEA-COMP:9923"/>
        <dbReference type="ChEBI" id="CHEBI:30616"/>
        <dbReference type="ChEBI" id="CHEBI:33019"/>
        <dbReference type="ChEBI" id="CHEBI:57972"/>
        <dbReference type="ChEBI" id="CHEBI:78442"/>
        <dbReference type="ChEBI" id="CHEBI:78497"/>
        <dbReference type="ChEBI" id="CHEBI:456215"/>
        <dbReference type="EC" id="6.1.1.7"/>
    </reaction>
</comment>
<comment type="cofactor">
    <cofactor evidence="1">
        <name>Zn(2+)</name>
        <dbReference type="ChEBI" id="CHEBI:29105"/>
    </cofactor>
    <text evidence="1">Binds 1 zinc ion per subunit.</text>
</comment>
<comment type="subcellular location">
    <subcellularLocation>
        <location evidence="1">Cytoplasm</location>
    </subcellularLocation>
</comment>
<comment type="domain">
    <text evidence="1">Consists of three domains; the N-terminal catalytic domain, the editing domain and the C-terminal C-Ala domain. The editing domain removes incorrectly charged amino acids, while the C-Ala domain, along with tRNA(Ala), serves as a bridge to cooperatively bring together the editing and aminoacylation centers thus stimulating deacylation of misacylated tRNAs.</text>
</comment>
<comment type="similarity">
    <text evidence="1">Belongs to the class-II aminoacyl-tRNA synthetase family.</text>
</comment>
<organism>
    <name type="scientific">Salinispora tropica (strain ATCC BAA-916 / DSM 44818 / JCM 13857 / NBRC 105044 / CNB-440)</name>
    <dbReference type="NCBI Taxonomy" id="369723"/>
    <lineage>
        <taxon>Bacteria</taxon>
        <taxon>Bacillati</taxon>
        <taxon>Actinomycetota</taxon>
        <taxon>Actinomycetes</taxon>
        <taxon>Micromonosporales</taxon>
        <taxon>Micromonosporaceae</taxon>
        <taxon>Salinispora</taxon>
    </lineage>
</organism>
<protein>
    <recommendedName>
        <fullName evidence="1">Alanine--tRNA ligase</fullName>
        <ecNumber evidence="1">6.1.1.7</ecNumber>
    </recommendedName>
    <alternativeName>
        <fullName evidence="1">Alanyl-tRNA synthetase</fullName>
        <shortName evidence="1">AlaRS</shortName>
    </alternativeName>
</protein>
<proteinExistence type="inferred from homology"/>